<accession>A4QJM1</accession>
<comment type="subunit">
    <text evidence="1">Part of the 30S ribosomal subunit.</text>
</comment>
<comment type="subcellular location">
    <subcellularLocation>
        <location>Plastid</location>
        <location>Chloroplast</location>
    </subcellularLocation>
</comment>
<comment type="similarity">
    <text evidence="1">Belongs to the bacterial ribosomal protein bS18 family.</text>
</comment>
<evidence type="ECO:0000255" key="1">
    <source>
        <dbReference type="HAMAP-Rule" id="MF_00270"/>
    </source>
</evidence>
<evidence type="ECO:0000305" key="2"/>
<name>RR18_AETGR</name>
<keyword id="KW-0150">Chloroplast</keyword>
<keyword id="KW-0934">Plastid</keyword>
<keyword id="KW-0687">Ribonucleoprotein</keyword>
<keyword id="KW-0689">Ribosomal protein</keyword>
<keyword id="KW-0694">RNA-binding</keyword>
<keyword id="KW-0699">rRNA-binding</keyword>
<geneLocation type="chloroplast"/>
<organism>
    <name type="scientific">Aethionema grandiflorum</name>
    <name type="common">Persian stone-cress</name>
    <dbReference type="NCBI Taxonomy" id="72657"/>
    <lineage>
        <taxon>Eukaryota</taxon>
        <taxon>Viridiplantae</taxon>
        <taxon>Streptophyta</taxon>
        <taxon>Embryophyta</taxon>
        <taxon>Tracheophyta</taxon>
        <taxon>Spermatophyta</taxon>
        <taxon>Magnoliopsida</taxon>
        <taxon>eudicotyledons</taxon>
        <taxon>Gunneridae</taxon>
        <taxon>Pentapetalae</taxon>
        <taxon>rosids</taxon>
        <taxon>malvids</taxon>
        <taxon>Brassicales</taxon>
        <taxon>Brassicaceae</taxon>
        <taxon>Aethionemeae</taxon>
        <taxon>Aethionema</taxon>
    </lineage>
</organism>
<protein>
    <recommendedName>
        <fullName evidence="1">Small ribosomal subunit protein bS18c</fullName>
    </recommendedName>
    <alternativeName>
        <fullName evidence="2">30S ribosomal protein S18, chloroplastic</fullName>
    </alternativeName>
</protein>
<gene>
    <name evidence="1" type="primary">rps18</name>
</gene>
<sequence length="101" mass="12030">MNKSKRLFPKSKRSFRRRLPPIQSGDRIDYRNMSLISRFISEQGKILSRRVNRVTLKQQRLITSAIKQARILSLLPFINNQKQFERSESTPRTTSLRTRKK</sequence>
<dbReference type="EMBL" id="AP009367">
    <property type="protein sequence ID" value="BAF49876.1"/>
    <property type="molecule type" value="Genomic_DNA"/>
</dbReference>
<dbReference type="RefSeq" id="YP_001123052.1">
    <property type="nucleotide sequence ID" value="NC_009266.1"/>
</dbReference>
<dbReference type="SMR" id="A4QJM1"/>
<dbReference type="GeneID" id="4962273"/>
<dbReference type="GO" id="GO:0009507">
    <property type="term" value="C:chloroplast"/>
    <property type="evidence" value="ECO:0007669"/>
    <property type="project" value="UniProtKB-SubCell"/>
</dbReference>
<dbReference type="GO" id="GO:0005763">
    <property type="term" value="C:mitochondrial small ribosomal subunit"/>
    <property type="evidence" value="ECO:0007669"/>
    <property type="project" value="TreeGrafter"/>
</dbReference>
<dbReference type="GO" id="GO:0070181">
    <property type="term" value="F:small ribosomal subunit rRNA binding"/>
    <property type="evidence" value="ECO:0007669"/>
    <property type="project" value="TreeGrafter"/>
</dbReference>
<dbReference type="GO" id="GO:0003735">
    <property type="term" value="F:structural constituent of ribosome"/>
    <property type="evidence" value="ECO:0007669"/>
    <property type="project" value="InterPro"/>
</dbReference>
<dbReference type="GO" id="GO:0006412">
    <property type="term" value="P:translation"/>
    <property type="evidence" value="ECO:0007669"/>
    <property type="project" value="UniProtKB-UniRule"/>
</dbReference>
<dbReference type="FunFam" id="4.10.640.10:FF:000002">
    <property type="entry name" value="30S ribosomal protein S18, chloroplastic"/>
    <property type="match status" value="1"/>
</dbReference>
<dbReference type="Gene3D" id="4.10.640.10">
    <property type="entry name" value="Ribosomal protein S18"/>
    <property type="match status" value="1"/>
</dbReference>
<dbReference type="HAMAP" id="MF_00270">
    <property type="entry name" value="Ribosomal_bS18"/>
    <property type="match status" value="1"/>
</dbReference>
<dbReference type="InterPro" id="IPR001648">
    <property type="entry name" value="Ribosomal_bS18"/>
</dbReference>
<dbReference type="InterPro" id="IPR018275">
    <property type="entry name" value="Ribosomal_bS18_CS"/>
</dbReference>
<dbReference type="InterPro" id="IPR036870">
    <property type="entry name" value="Ribosomal_bS18_sf"/>
</dbReference>
<dbReference type="NCBIfam" id="TIGR00165">
    <property type="entry name" value="S18"/>
    <property type="match status" value="1"/>
</dbReference>
<dbReference type="PANTHER" id="PTHR13479">
    <property type="entry name" value="30S RIBOSOMAL PROTEIN S18"/>
    <property type="match status" value="1"/>
</dbReference>
<dbReference type="PANTHER" id="PTHR13479:SF40">
    <property type="entry name" value="SMALL RIBOSOMAL SUBUNIT PROTEIN BS18M"/>
    <property type="match status" value="1"/>
</dbReference>
<dbReference type="Pfam" id="PF01084">
    <property type="entry name" value="Ribosomal_S18"/>
    <property type="match status" value="1"/>
</dbReference>
<dbReference type="PRINTS" id="PR00974">
    <property type="entry name" value="RIBOSOMALS18"/>
</dbReference>
<dbReference type="SUPFAM" id="SSF46911">
    <property type="entry name" value="Ribosomal protein S18"/>
    <property type="match status" value="1"/>
</dbReference>
<dbReference type="PROSITE" id="PS00057">
    <property type="entry name" value="RIBOSOMAL_S18"/>
    <property type="match status" value="1"/>
</dbReference>
<reference key="1">
    <citation type="submission" date="2007-03" db="EMBL/GenBank/DDBJ databases">
        <title>Sequencing analysis of Aethionema grandiflorum chloroplast DNA.</title>
        <authorList>
            <person name="Hosouchi T."/>
            <person name="Tsuruoka H."/>
            <person name="Kotani H."/>
        </authorList>
    </citation>
    <scope>NUCLEOTIDE SEQUENCE [LARGE SCALE GENOMIC DNA]</scope>
</reference>
<proteinExistence type="inferred from homology"/>
<feature type="chain" id="PRO_0000345565" description="Small ribosomal subunit protein bS18c">
    <location>
        <begin position="1"/>
        <end position="101"/>
    </location>
</feature>